<proteinExistence type="inferred from homology"/>
<organism>
    <name type="scientific">Bifidobacterium animalis subsp. lactis (strain AD011)</name>
    <dbReference type="NCBI Taxonomy" id="442563"/>
    <lineage>
        <taxon>Bacteria</taxon>
        <taxon>Bacillati</taxon>
        <taxon>Actinomycetota</taxon>
        <taxon>Actinomycetes</taxon>
        <taxon>Bifidobacteriales</taxon>
        <taxon>Bifidobacteriaceae</taxon>
        <taxon>Bifidobacterium</taxon>
    </lineage>
</organism>
<accession>B8DUY2</accession>
<sequence>MLLSDRDIRAAHAEGHISLDPWTDEMVQPASIDVRLDRFFRLFNNHAYTYVDPAENQGELTEQFEVGPDEPWILHPGEFALGSTWEYVKIDETLAARLEGKSSLGRLGILTHSTAGFIDPGFEGHITLELSNVSTLPVKLWPGMKIGQMCFFQLSSPSEHPYGSETTGSHYQGQRGPTPSRSYQNFYRAQITD</sequence>
<reference key="1">
    <citation type="journal article" date="2009" name="J. Bacteriol.">
        <title>Genome sequence of the probiotic bacterium Bifidobacterium animalis subsp. lactis AD011.</title>
        <authorList>
            <person name="Kim J.F."/>
            <person name="Jeong H."/>
            <person name="Yu D.S."/>
            <person name="Choi S.-H."/>
            <person name="Hur C.-G."/>
            <person name="Park M.-S."/>
            <person name="Yoon S.H."/>
            <person name="Kim D.-W."/>
            <person name="Ji G.E."/>
            <person name="Park H.-S."/>
            <person name="Oh T.K."/>
        </authorList>
    </citation>
    <scope>NUCLEOTIDE SEQUENCE [LARGE SCALE GENOMIC DNA]</scope>
    <source>
        <strain>AD011</strain>
    </source>
</reference>
<dbReference type="EC" id="3.5.4.30" evidence="1"/>
<dbReference type="EMBL" id="CP001213">
    <property type="protein sequence ID" value="ACL29811.1"/>
    <property type="molecule type" value="Genomic_DNA"/>
</dbReference>
<dbReference type="RefSeq" id="WP_004218977.1">
    <property type="nucleotide sequence ID" value="NC_011835.1"/>
</dbReference>
<dbReference type="SMR" id="B8DUY2"/>
<dbReference type="STRING" id="442563.BLA_1529"/>
<dbReference type="GeneID" id="29695493"/>
<dbReference type="KEGG" id="bla:BLA_1529"/>
<dbReference type="HOGENOM" id="CLU_087476_2_0_11"/>
<dbReference type="UniPathway" id="UPA00610">
    <property type="reaction ID" value="UER00667"/>
</dbReference>
<dbReference type="Proteomes" id="UP000002456">
    <property type="component" value="Chromosome"/>
</dbReference>
<dbReference type="GO" id="GO:0033973">
    <property type="term" value="F:dCTP deaminase (dUMP-forming) activity"/>
    <property type="evidence" value="ECO:0007669"/>
    <property type="project" value="UniProtKB-UniRule"/>
</dbReference>
<dbReference type="GO" id="GO:0008829">
    <property type="term" value="F:dCTP deaminase activity"/>
    <property type="evidence" value="ECO:0007669"/>
    <property type="project" value="InterPro"/>
</dbReference>
<dbReference type="GO" id="GO:0000166">
    <property type="term" value="F:nucleotide binding"/>
    <property type="evidence" value="ECO:0007669"/>
    <property type="project" value="UniProtKB-KW"/>
</dbReference>
<dbReference type="GO" id="GO:0006226">
    <property type="term" value="P:dUMP biosynthetic process"/>
    <property type="evidence" value="ECO:0007669"/>
    <property type="project" value="UniProtKB-UniRule"/>
</dbReference>
<dbReference type="GO" id="GO:0006229">
    <property type="term" value="P:dUTP biosynthetic process"/>
    <property type="evidence" value="ECO:0007669"/>
    <property type="project" value="InterPro"/>
</dbReference>
<dbReference type="GO" id="GO:0015949">
    <property type="term" value="P:nucleobase-containing small molecule interconversion"/>
    <property type="evidence" value="ECO:0007669"/>
    <property type="project" value="TreeGrafter"/>
</dbReference>
<dbReference type="CDD" id="cd07557">
    <property type="entry name" value="trimeric_dUTPase"/>
    <property type="match status" value="1"/>
</dbReference>
<dbReference type="FunFam" id="2.70.40.10:FF:000005">
    <property type="entry name" value="dCTP deaminase, dUMP-forming"/>
    <property type="match status" value="1"/>
</dbReference>
<dbReference type="Gene3D" id="2.70.40.10">
    <property type="match status" value="1"/>
</dbReference>
<dbReference type="HAMAP" id="MF_00146">
    <property type="entry name" value="dCTP_deaminase"/>
    <property type="match status" value="1"/>
</dbReference>
<dbReference type="InterPro" id="IPR011962">
    <property type="entry name" value="dCTP_deaminase"/>
</dbReference>
<dbReference type="InterPro" id="IPR036157">
    <property type="entry name" value="dUTPase-like_sf"/>
</dbReference>
<dbReference type="InterPro" id="IPR033704">
    <property type="entry name" value="dUTPase_trimeric"/>
</dbReference>
<dbReference type="NCBIfam" id="TIGR02274">
    <property type="entry name" value="dCTP_deam"/>
    <property type="match status" value="1"/>
</dbReference>
<dbReference type="PANTHER" id="PTHR42680">
    <property type="entry name" value="DCTP DEAMINASE"/>
    <property type="match status" value="1"/>
</dbReference>
<dbReference type="PANTHER" id="PTHR42680:SF3">
    <property type="entry name" value="DCTP DEAMINASE"/>
    <property type="match status" value="1"/>
</dbReference>
<dbReference type="Pfam" id="PF22769">
    <property type="entry name" value="DCD"/>
    <property type="match status" value="1"/>
</dbReference>
<dbReference type="SUPFAM" id="SSF51283">
    <property type="entry name" value="dUTPase-like"/>
    <property type="match status" value="1"/>
</dbReference>
<feature type="chain" id="PRO_1000123137" description="dCTP deaminase, dUMP-forming">
    <location>
        <begin position="1"/>
        <end position="193"/>
    </location>
</feature>
<feature type="region of interest" description="Disordered" evidence="2">
    <location>
        <begin position="161"/>
        <end position="184"/>
    </location>
</feature>
<feature type="active site" description="Proton donor/acceptor" evidence="1">
    <location>
        <position position="129"/>
    </location>
</feature>
<feature type="binding site" evidence="1">
    <location>
        <begin position="101"/>
        <end position="106"/>
    </location>
    <ligand>
        <name>dCTP</name>
        <dbReference type="ChEBI" id="CHEBI:61481"/>
    </ligand>
</feature>
<feature type="binding site" evidence="1">
    <location>
        <position position="119"/>
    </location>
    <ligand>
        <name>dCTP</name>
        <dbReference type="ChEBI" id="CHEBI:61481"/>
    </ligand>
</feature>
<feature type="binding site" evidence="1">
    <location>
        <begin position="127"/>
        <end position="129"/>
    </location>
    <ligand>
        <name>dCTP</name>
        <dbReference type="ChEBI" id="CHEBI:61481"/>
    </ligand>
</feature>
<feature type="binding site" evidence="1">
    <location>
        <position position="148"/>
    </location>
    <ligand>
        <name>dCTP</name>
        <dbReference type="ChEBI" id="CHEBI:61481"/>
    </ligand>
</feature>
<feature type="binding site" evidence="1">
    <location>
        <position position="162"/>
    </location>
    <ligand>
        <name>dCTP</name>
        <dbReference type="ChEBI" id="CHEBI:61481"/>
    </ligand>
</feature>
<feature type="binding site" evidence="1">
    <location>
        <position position="174"/>
    </location>
    <ligand>
        <name>dCTP</name>
        <dbReference type="ChEBI" id="CHEBI:61481"/>
    </ligand>
</feature>
<feature type="site" description="Important for bifunctional activity" evidence="1">
    <location>
        <begin position="116"/>
        <end position="117"/>
    </location>
</feature>
<comment type="function">
    <text evidence="1">Bifunctional enzyme that catalyzes both the deamination of dCTP to dUTP and the hydrolysis of dUTP to dUMP without releasing the toxic dUTP intermediate.</text>
</comment>
<comment type="catalytic activity">
    <reaction evidence="1">
        <text>dCTP + 2 H2O = dUMP + NH4(+) + diphosphate</text>
        <dbReference type="Rhea" id="RHEA:19205"/>
        <dbReference type="ChEBI" id="CHEBI:15377"/>
        <dbReference type="ChEBI" id="CHEBI:28938"/>
        <dbReference type="ChEBI" id="CHEBI:33019"/>
        <dbReference type="ChEBI" id="CHEBI:61481"/>
        <dbReference type="ChEBI" id="CHEBI:246422"/>
        <dbReference type="EC" id="3.5.4.30"/>
    </reaction>
</comment>
<comment type="pathway">
    <text evidence="1">Pyrimidine metabolism; dUMP biosynthesis; dUMP from dCTP: step 1/1.</text>
</comment>
<comment type="subunit">
    <text evidence="1">Homotrimer.</text>
</comment>
<comment type="similarity">
    <text evidence="1">Belongs to the dCTP deaminase family.</text>
</comment>
<name>DCDB_BIFA0</name>
<protein>
    <recommendedName>
        <fullName evidence="1">dCTP deaminase, dUMP-forming</fullName>
        <ecNumber evidence="1">3.5.4.30</ecNumber>
    </recommendedName>
    <alternativeName>
        <fullName evidence="1">Bifunctional dCTP deaminase:dUTPase</fullName>
    </alternativeName>
    <alternativeName>
        <fullName evidence="1">DCD-DUT</fullName>
    </alternativeName>
</protein>
<gene>
    <name evidence="1" type="primary">dcd</name>
    <name type="ordered locus">BLA_1529</name>
</gene>
<evidence type="ECO:0000255" key="1">
    <source>
        <dbReference type="HAMAP-Rule" id="MF_00146"/>
    </source>
</evidence>
<evidence type="ECO:0000256" key="2">
    <source>
        <dbReference type="SAM" id="MobiDB-lite"/>
    </source>
</evidence>
<keyword id="KW-0378">Hydrolase</keyword>
<keyword id="KW-0546">Nucleotide metabolism</keyword>
<keyword id="KW-0547">Nucleotide-binding</keyword>
<keyword id="KW-1185">Reference proteome</keyword>